<sequence length="428" mass="45873">MSAIVDIIGREILDSRGNPTVECDVLLESGAMGRAAVPSGASTGEREAIELRDGDKSRYLGKGVLRAVENLNTEISEALMGLDAQEQTFVDRTLIELDGTDTKERLGANALLAASMAVARAAADESGLSLYRYFGGSGPMSMPVPMMNVINGGAHANNTLDLQELMILPVGATSFREALRWGAEVFHALKKLIHGQGMSTAVGDEGGFAPNVPNHEAAIQLILKAIAEAGYEPGSQIALGLDCASSEFYRDGKYTLAGEGGLSLSSQEFANLLATWCDKYPIISIEDGMAENDWEGWKLLTDQLGKKVQLVGDDLFVTNTRILKEGIQKGVANSILIKINQIGTLTETFAAIEMAKRAGYTAVVSHRSGETEDSTIADIAVATNAMQIKTGSLSRSDRMAKYNQLLRIEEELAEVASYPGLDAFYNLR</sequence>
<dbReference type="EC" id="4.2.1.11" evidence="1"/>
<dbReference type="EMBL" id="AM902716">
    <property type="protein sequence ID" value="CAP42141.1"/>
    <property type="molecule type" value="Genomic_DNA"/>
</dbReference>
<dbReference type="SMR" id="A9IIP8"/>
<dbReference type="STRING" id="94624.Bpet1802"/>
<dbReference type="KEGG" id="bpt:Bpet1802"/>
<dbReference type="eggNOG" id="COG0148">
    <property type="taxonomic scope" value="Bacteria"/>
</dbReference>
<dbReference type="UniPathway" id="UPA00109">
    <property type="reaction ID" value="UER00187"/>
</dbReference>
<dbReference type="Proteomes" id="UP000001225">
    <property type="component" value="Chromosome"/>
</dbReference>
<dbReference type="GO" id="GO:0009986">
    <property type="term" value="C:cell surface"/>
    <property type="evidence" value="ECO:0007669"/>
    <property type="project" value="UniProtKB-SubCell"/>
</dbReference>
<dbReference type="GO" id="GO:0005576">
    <property type="term" value="C:extracellular region"/>
    <property type="evidence" value="ECO:0007669"/>
    <property type="project" value="UniProtKB-SubCell"/>
</dbReference>
<dbReference type="GO" id="GO:0000015">
    <property type="term" value="C:phosphopyruvate hydratase complex"/>
    <property type="evidence" value="ECO:0007669"/>
    <property type="project" value="InterPro"/>
</dbReference>
<dbReference type="GO" id="GO:0000287">
    <property type="term" value="F:magnesium ion binding"/>
    <property type="evidence" value="ECO:0007669"/>
    <property type="project" value="UniProtKB-UniRule"/>
</dbReference>
<dbReference type="GO" id="GO:0004634">
    <property type="term" value="F:phosphopyruvate hydratase activity"/>
    <property type="evidence" value="ECO:0007669"/>
    <property type="project" value="UniProtKB-UniRule"/>
</dbReference>
<dbReference type="GO" id="GO:0006096">
    <property type="term" value="P:glycolytic process"/>
    <property type="evidence" value="ECO:0007669"/>
    <property type="project" value="UniProtKB-UniRule"/>
</dbReference>
<dbReference type="CDD" id="cd03313">
    <property type="entry name" value="enolase"/>
    <property type="match status" value="1"/>
</dbReference>
<dbReference type="FunFam" id="3.20.20.120:FF:000001">
    <property type="entry name" value="Enolase"/>
    <property type="match status" value="1"/>
</dbReference>
<dbReference type="FunFam" id="3.30.390.10:FF:000001">
    <property type="entry name" value="Enolase"/>
    <property type="match status" value="1"/>
</dbReference>
<dbReference type="Gene3D" id="3.20.20.120">
    <property type="entry name" value="Enolase-like C-terminal domain"/>
    <property type="match status" value="1"/>
</dbReference>
<dbReference type="Gene3D" id="3.30.390.10">
    <property type="entry name" value="Enolase-like, N-terminal domain"/>
    <property type="match status" value="1"/>
</dbReference>
<dbReference type="HAMAP" id="MF_00318">
    <property type="entry name" value="Enolase"/>
    <property type="match status" value="1"/>
</dbReference>
<dbReference type="InterPro" id="IPR000941">
    <property type="entry name" value="Enolase"/>
</dbReference>
<dbReference type="InterPro" id="IPR036849">
    <property type="entry name" value="Enolase-like_C_sf"/>
</dbReference>
<dbReference type="InterPro" id="IPR029017">
    <property type="entry name" value="Enolase-like_N"/>
</dbReference>
<dbReference type="InterPro" id="IPR020810">
    <property type="entry name" value="Enolase_C"/>
</dbReference>
<dbReference type="InterPro" id="IPR020809">
    <property type="entry name" value="Enolase_CS"/>
</dbReference>
<dbReference type="InterPro" id="IPR020811">
    <property type="entry name" value="Enolase_N"/>
</dbReference>
<dbReference type="NCBIfam" id="TIGR01060">
    <property type="entry name" value="eno"/>
    <property type="match status" value="1"/>
</dbReference>
<dbReference type="PANTHER" id="PTHR11902">
    <property type="entry name" value="ENOLASE"/>
    <property type="match status" value="1"/>
</dbReference>
<dbReference type="PANTHER" id="PTHR11902:SF1">
    <property type="entry name" value="ENOLASE"/>
    <property type="match status" value="1"/>
</dbReference>
<dbReference type="Pfam" id="PF00113">
    <property type="entry name" value="Enolase_C"/>
    <property type="match status" value="1"/>
</dbReference>
<dbReference type="Pfam" id="PF03952">
    <property type="entry name" value="Enolase_N"/>
    <property type="match status" value="1"/>
</dbReference>
<dbReference type="PIRSF" id="PIRSF001400">
    <property type="entry name" value="Enolase"/>
    <property type="match status" value="1"/>
</dbReference>
<dbReference type="PRINTS" id="PR00148">
    <property type="entry name" value="ENOLASE"/>
</dbReference>
<dbReference type="SFLD" id="SFLDF00002">
    <property type="entry name" value="enolase"/>
    <property type="match status" value="1"/>
</dbReference>
<dbReference type="SFLD" id="SFLDG00178">
    <property type="entry name" value="enolase"/>
    <property type="match status" value="1"/>
</dbReference>
<dbReference type="SMART" id="SM01192">
    <property type="entry name" value="Enolase_C"/>
    <property type="match status" value="1"/>
</dbReference>
<dbReference type="SMART" id="SM01193">
    <property type="entry name" value="Enolase_N"/>
    <property type="match status" value="1"/>
</dbReference>
<dbReference type="SUPFAM" id="SSF51604">
    <property type="entry name" value="Enolase C-terminal domain-like"/>
    <property type="match status" value="1"/>
</dbReference>
<dbReference type="SUPFAM" id="SSF54826">
    <property type="entry name" value="Enolase N-terminal domain-like"/>
    <property type="match status" value="1"/>
</dbReference>
<dbReference type="PROSITE" id="PS00164">
    <property type="entry name" value="ENOLASE"/>
    <property type="match status" value="1"/>
</dbReference>
<keyword id="KW-0963">Cytoplasm</keyword>
<keyword id="KW-0324">Glycolysis</keyword>
<keyword id="KW-0456">Lyase</keyword>
<keyword id="KW-0460">Magnesium</keyword>
<keyword id="KW-0479">Metal-binding</keyword>
<keyword id="KW-0964">Secreted</keyword>
<gene>
    <name evidence="1" type="primary">eno</name>
    <name type="ordered locus">Bpet1802</name>
</gene>
<feature type="chain" id="PRO_1000115833" description="Enolase">
    <location>
        <begin position="1"/>
        <end position="428"/>
    </location>
</feature>
<feature type="active site" description="Proton donor" evidence="1">
    <location>
        <position position="205"/>
    </location>
</feature>
<feature type="active site" description="Proton acceptor" evidence="1">
    <location>
        <position position="338"/>
    </location>
</feature>
<feature type="binding site" evidence="1">
    <location>
        <position position="163"/>
    </location>
    <ligand>
        <name>(2R)-2-phosphoglycerate</name>
        <dbReference type="ChEBI" id="CHEBI:58289"/>
    </ligand>
</feature>
<feature type="binding site" evidence="1">
    <location>
        <position position="242"/>
    </location>
    <ligand>
        <name>Mg(2+)</name>
        <dbReference type="ChEBI" id="CHEBI:18420"/>
    </ligand>
</feature>
<feature type="binding site" evidence="1">
    <location>
        <position position="286"/>
    </location>
    <ligand>
        <name>Mg(2+)</name>
        <dbReference type="ChEBI" id="CHEBI:18420"/>
    </ligand>
</feature>
<feature type="binding site" evidence="1">
    <location>
        <position position="313"/>
    </location>
    <ligand>
        <name>Mg(2+)</name>
        <dbReference type="ChEBI" id="CHEBI:18420"/>
    </ligand>
</feature>
<feature type="binding site" evidence="1">
    <location>
        <position position="338"/>
    </location>
    <ligand>
        <name>(2R)-2-phosphoglycerate</name>
        <dbReference type="ChEBI" id="CHEBI:58289"/>
    </ligand>
</feature>
<feature type="binding site" evidence="1">
    <location>
        <position position="367"/>
    </location>
    <ligand>
        <name>(2R)-2-phosphoglycerate</name>
        <dbReference type="ChEBI" id="CHEBI:58289"/>
    </ligand>
</feature>
<feature type="binding site" evidence="1">
    <location>
        <position position="368"/>
    </location>
    <ligand>
        <name>(2R)-2-phosphoglycerate</name>
        <dbReference type="ChEBI" id="CHEBI:58289"/>
    </ligand>
</feature>
<feature type="binding site" evidence="1">
    <location>
        <position position="389"/>
    </location>
    <ligand>
        <name>(2R)-2-phosphoglycerate</name>
        <dbReference type="ChEBI" id="CHEBI:58289"/>
    </ligand>
</feature>
<name>ENO_BORPD</name>
<evidence type="ECO:0000255" key="1">
    <source>
        <dbReference type="HAMAP-Rule" id="MF_00318"/>
    </source>
</evidence>
<accession>A9IIP8</accession>
<comment type="function">
    <text evidence="1">Catalyzes the reversible conversion of 2-phosphoglycerate (2-PG) into phosphoenolpyruvate (PEP). It is essential for the degradation of carbohydrates via glycolysis.</text>
</comment>
<comment type="catalytic activity">
    <reaction evidence="1">
        <text>(2R)-2-phosphoglycerate = phosphoenolpyruvate + H2O</text>
        <dbReference type="Rhea" id="RHEA:10164"/>
        <dbReference type="ChEBI" id="CHEBI:15377"/>
        <dbReference type="ChEBI" id="CHEBI:58289"/>
        <dbReference type="ChEBI" id="CHEBI:58702"/>
        <dbReference type="EC" id="4.2.1.11"/>
    </reaction>
</comment>
<comment type="cofactor">
    <cofactor evidence="1">
        <name>Mg(2+)</name>
        <dbReference type="ChEBI" id="CHEBI:18420"/>
    </cofactor>
    <text evidence="1">Binds a second Mg(2+) ion via substrate during catalysis.</text>
</comment>
<comment type="pathway">
    <text evidence="1">Carbohydrate degradation; glycolysis; pyruvate from D-glyceraldehyde 3-phosphate: step 4/5.</text>
</comment>
<comment type="subcellular location">
    <subcellularLocation>
        <location evidence="1">Cytoplasm</location>
    </subcellularLocation>
    <subcellularLocation>
        <location evidence="1">Secreted</location>
    </subcellularLocation>
    <subcellularLocation>
        <location evidence="1">Cell surface</location>
    </subcellularLocation>
    <text evidence="1">Fractions of enolase are present in both the cytoplasm and on the cell surface.</text>
</comment>
<comment type="similarity">
    <text evidence="1">Belongs to the enolase family.</text>
</comment>
<reference key="1">
    <citation type="journal article" date="2008" name="BMC Genomics">
        <title>The missing link: Bordetella petrii is endowed with both the metabolic versatility of environmental bacteria and virulence traits of pathogenic Bordetellae.</title>
        <authorList>
            <person name="Gross R."/>
            <person name="Guzman C.A."/>
            <person name="Sebaihia M."/>
            <person name="Martin dos Santos V.A.P."/>
            <person name="Pieper D.H."/>
            <person name="Koebnik R."/>
            <person name="Lechner M."/>
            <person name="Bartels D."/>
            <person name="Buhrmester J."/>
            <person name="Choudhuri J.V."/>
            <person name="Ebensen T."/>
            <person name="Gaigalat L."/>
            <person name="Herrmann S."/>
            <person name="Khachane A.N."/>
            <person name="Larisch C."/>
            <person name="Link S."/>
            <person name="Linke B."/>
            <person name="Meyer F."/>
            <person name="Mormann S."/>
            <person name="Nakunst D."/>
            <person name="Rueckert C."/>
            <person name="Schneiker-Bekel S."/>
            <person name="Schulze K."/>
            <person name="Voerholter F.-J."/>
            <person name="Yevsa T."/>
            <person name="Engle J.T."/>
            <person name="Goldman W.E."/>
            <person name="Puehler A."/>
            <person name="Goebel U.B."/>
            <person name="Goesmann A."/>
            <person name="Bloecker H."/>
            <person name="Kaiser O."/>
            <person name="Martinez-Arias R."/>
        </authorList>
    </citation>
    <scope>NUCLEOTIDE SEQUENCE [LARGE SCALE GENOMIC DNA]</scope>
    <source>
        <strain>ATCC BAA-461 / DSM 12804 / CCUG 43448</strain>
    </source>
</reference>
<organism>
    <name type="scientific">Bordetella petrii (strain ATCC BAA-461 / DSM 12804 / CCUG 43448)</name>
    <dbReference type="NCBI Taxonomy" id="340100"/>
    <lineage>
        <taxon>Bacteria</taxon>
        <taxon>Pseudomonadati</taxon>
        <taxon>Pseudomonadota</taxon>
        <taxon>Betaproteobacteria</taxon>
        <taxon>Burkholderiales</taxon>
        <taxon>Alcaligenaceae</taxon>
        <taxon>Bordetella</taxon>
    </lineage>
</organism>
<proteinExistence type="inferred from homology"/>
<protein>
    <recommendedName>
        <fullName evidence="1">Enolase</fullName>
        <ecNumber evidence="1">4.2.1.11</ecNumber>
    </recommendedName>
    <alternativeName>
        <fullName evidence="1">2-phospho-D-glycerate hydro-lyase</fullName>
    </alternativeName>
    <alternativeName>
        <fullName evidence="1">2-phosphoglycerate dehydratase</fullName>
    </alternativeName>
</protein>